<name>O16L_CONTE</name>
<comment type="function">
    <text evidence="1">Omega-conotoxins act at presynaptic membranes, they bind and block voltage-gated calcium channels (Cav).</text>
</comment>
<comment type="subcellular location">
    <subcellularLocation>
        <location evidence="1">Secreted</location>
    </subcellularLocation>
</comment>
<comment type="tissue specificity">
    <text>Expressed by the venom duct.</text>
</comment>
<comment type="domain">
    <text evidence="1">The presence of a 'disulfide through disulfide knot' structurally defines this protein as a knottin.</text>
</comment>
<comment type="domain">
    <text>The cysteine framework is VI/VII (C-C-CC-C-C).</text>
</comment>
<comment type="similarity">
    <text evidence="4">Belongs to the conotoxin O1 superfamily.</text>
</comment>
<organism>
    <name type="scientific">Conus textile</name>
    <name type="common">Cloth-of-gold cone</name>
    <dbReference type="NCBI Taxonomy" id="6494"/>
    <lineage>
        <taxon>Eukaryota</taxon>
        <taxon>Metazoa</taxon>
        <taxon>Spiralia</taxon>
        <taxon>Lophotrochozoa</taxon>
        <taxon>Mollusca</taxon>
        <taxon>Gastropoda</taxon>
        <taxon>Caenogastropoda</taxon>
        <taxon>Neogastropoda</taxon>
        <taxon>Conoidea</taxon>
        <taxon>Conidae</taxon>
        <taxon>Conus</taxon>
        <taxon>Cylinder</taxon>
    </lineage>
</organism>
<keyword id="KW-0108">Calcium channel impairing toxin</keyword>
<keyword id="KW-1015">Disulfide bond</keyword>
<keyword id="KW-0872">Ion channel impairing toxin</keyword>
<keyword id="KW-0960">Knottin</keyword>
<keyword id="KW-0528">Neurotoxin</keyword>
<keyword id="KW-0638">Presynaptic neurotoxin</keyword>
<keyword id="KW-0964">Secreted</keyword>
<keyword id="KW-0732">Signal</keyword>
<keyword id="KW-0800">Toxin</keyword>
<keyword id="KW-1218">Voltage-gated calcium channel impairing toxin</keyword>
<feature type="signal peptide" evidence="3">
    <location>
        <begin position="1"/>
        <end position="22"/>
    </location>
</feature>
<feature type="propeptide" id="PRO_0000404770" evidence="1">
    <location>
        <begin position="23"/>
        <end position="52"/>
    </location>
</feature>
<feature type="peptide" id="PRO_0000404771" description="Omega-conotoxin-like TxMKLT1-0223">
    <location>
        <begin position="53"/>
        <end position="81"/>
    </location>
</feature>
<feature type="disulfide bond" evidence="2">
    <location>
        <begin position="55"/>
        <end position="72"/>
    </location>
</feature>
<feature type="disulfide bond" evidence="2">
    <location>
        <begin position="62"/>
        <end position="76"/>
    </location>
</feature>
<feature type="disulfide bond" evidence="2">
    <location>
        <begin position="71"/>
        <end position="80"/>
    </location>
</feature>
<reference key="1">
    <citation type="journal article" date="2001" name="Mol. Biol. Evol.">
        <title>Mechanisms for evolving hypervariability: the case of conopeptides.</title>
        <authorList>
            <person name="Conticello S.G."/>
            <person name="Gilad Y."/>
            <person name="Avidan N."/>
            <person name="Ben-Asher E."/>
            <person name="Levy Z."/>
            <person name="Fainzilber M."/>
        </authorList>
    </citation>
    <scope>NUCLEOTIDE SEQUENCE [MRNA]</scope>
    <source>
        <tissue>Venom duct</tissue>
    </source>
</reference>
<dbReference type="EMBL" id="AF193271">
    <property type="protein sequence ID" value="AAF07982.1"/>
    <property type="molecule type" value="mRNA"/>
</dbReference>
<dbReference type="SMR" id="Q9U645"/>
<dbReference type="ConoServer" id="1104">
    <property type="toxin name" value="Tx6.4 precursor"/>
</dbReference>
<dbReference type="GO" id="GO:0005576">
    <property type="term" value="C:extracellular region"/>
    <property type="evidence" value="ECO:0007669"/>
    <property type="project" value="UniProtKB-SubCell"/>
</dbReference>
<dbReference type="GO" id="GO:0044231">
    <property type="term" value="C:host cell presynaptic membrane"/>
    <property type="evidence" value="ECO:0007669"/>
    <property type="project" value="UniProtKB-KW"/>
</dbReference>
<dbReference type="GO" id="GO:0005246">
    <property type="term" value="F:calcium channel regulator activity"/>
    <property type="evidence" value="ECO:0007669"/>
    <property type="project" value="UniProtKB-KW"/>
</dbReference>
<dbReference type="GO" id="GO:0008200">
    <property type="term" value="F:ion channel inhibitor activity"/>
    <property type="evidence" value="ECO:0007669"/>
    <property type="project" value="InterPro"/>
</dbReference>
<dbReference type="GO" id="GO:0090729">
    <property type="term" value="F:toxin activity"/>
    <property type="evidence" value="ECO:0007669"/>
    <property type="project" value="UniProtKB-KW"/>
</dbReference>
<dbReference type="InterPro" id="IPR004214">
    <property type="entry name" value="Conotoxin"/>
</dbReference>
<dbReference type="InterPro" id="IPR012321">
    <property type="entry name" value="Conotoxin_omega-typ_CS"/>
</dbReference>
<dbReference type="Pfam" id="PF02950">
    <property type="entry name" value="Conotoxin"/>
    <property type="match status" value="1"/>
</dbReference>
<dbReference type="PROSITE" id="PS60004">
    <property type="entry name" value="OMEGA_CONOTOXIN"/>
    <property type="match status" value="1"/>
</dbReference>
<accession>Q9U645</accession>
<evidence type="ECO:0000250" key="1"/>
<evidence type="ECO:0000250" key="2">
    <source>
        <dbReference type="UniProtKB" id="Q26443"/>
    </source>
</evidence>
<evidence type="ECO:0000255" key="3"/>
<evidence type="ECO:0000305" key="4"/>
<protein>
    <recommendedName>
        <fullName>Omega-conotoxin-like TxMKLT1-0223</fullName>
    </recommendedName>
</protein>
<proteinExistence type="evidence at transcript level"/>
<sequence>MKLTCMMIVAVLFLTAWTFVTAVPHSSNALENLYLKARHEMENPEASKLNTRDDCEPPGNFCGMIKIGPPCCSGWCFFACA</sequence>